<protein>
    <recommendedName>
        <fullName evidence="1">Bifunctional protein Aas</fullName>
    </recommendedName>
    <domain>
        <recommendedName>
            <fullName evidence="1">2-acylglycerophosphoethanolamine acyltransferase</fullName>
            <ecNumber evidence="1">2.3.1.40</ecNumber>
        </recommendedName>
        <alternativeName>
            <fullName evidence="1">2-acyl-GPE acyltransferase</fullName>
        </alternativeName>
        <alternativeName>
            <fullName evidence="1">Acyl-[acyl-carrier-protein]--phospholipid O-acyltransferase</fullName>
        </alternativeName>
    </domain>
    <domain>
        <recommendedName>
            <fullName evidence="1">Acyl-[acyl-carrier-protein] synthetase</fullName>
            <ecNumber evidence="1">6.2.1.20</ecNumber>
        </recommendedName>
        <alternativeName>
            <fullName evidence="1">Acyl-ACP synthetase</fullName>
        </alternativeName>
        <alternativeName>
            <fullName evidence="1">Long-chain-fatty-acid--[acyl-carrier-protein] ligase</fullName>
        </alternativeName>
    </domain>
</protein>
<accession>C6DE43</accession>
<feature type="chain" id="PRO_1000213723" description="Bifunctional protein Aas">
    <location>
        <begin position="1"/>
        <end position="723"/>
    </location>
</feature>
<feature type="transmembrane region" description="Helical" evidence="1">
    <location>
        <begin position="258"/>
        <end position="277"/>
    </location>
</feature>
<feature type="transmembrane region" description="Helical" evidence="1">
    <location>
        <begin position="409"/>
        <end position="433"/>
    </location>
</feature>
<feature type="region of interest" description="Acyltransferase">
    <location>
        <begin position="15"/>
        <end position="138"/>
    </location>
</feature>
<feature type="region of interest" description="AMP-binding">
    <location>
        <begin position="233"/>
        <end position="646"/>
    </location>
</feature>
<feature type="active site" evidence="1">
    <location>
        <position position="36"/>
    </location>
</feature>
<dbReference type="EC" id="2.3.1.40" evidence="1"/>
<dbReference type="EC" id="6.2.1.20" evidence="1"/>
<dbReference type="EMBL" id="CP001657">
    <property type="protein sequence ID" value="ACT14479.1"/>
    <property type="molecule type" value="Genomic_DNA"/>
</dbReference>
<dbReference type="RefSeq" id="WP_015841602.1">
    <property type="nucleotide sequence ID" value="NC_012917.1"/>
</dbReference>
<dbReference type="SMR" id="C6DE43"/>
<dbReference type="STRING" id="561230.PC1_3463"/>
<dbReference type="KEGG" id="pct:PC1_3463"/>
<dbReference type="eggNOG" id="COG0204">
    <property type="taxonomic scope" value="Bacteria"/>
</dbReference>
<dbReference type="eggNOG" id="COG0318">
    <property type="taxonomic scope" value="Bacteria"/>
</dbReference>
<dbReference type="HOGENOM" id="CLU_000022_59_8_6"/>
<dbReference type="OrthoDB" id="9803968at2"/>
<dbReference type="Proteomes" id="UP000002736">
    <property type="component" value="Chromosome"/>
</dbReference>
<dbReference type="GO" id="GO:0005886">
    <property type="term" value="C:plasma membrane"/>
    <property type="evidence" value="ECO:0007669"/>
    <property type="project" value="UniProtKB-SubCell"/>
</dbReference>
<dbReference type="GO" id="GO:0008779">
    <property type="term" value="F:acyl-[acyl-carrier-protein]-phospholipid O-acyltransferase activity"/>
    <property type="evidence" value="ECO:0007669"/>
    <property type="project" value="UniProtKB-UniRule"/>
</dbReference>
<dbReference type="GO" id="GO:0005524">
    <property type="term" value="F:ATP binding"/>
    <property type="evidence" value="ECO:0007669"/>
    <property type="project" value="UniProtKB-KW"/>
</dbReference>
<dbReference type="GO" id="GO:0008922">
    <property type="term" value="F:long-chain fatty acid [acyl-carrier-protein] ligase activity"/>
    <property type="evidence" value="ECO:0007669"/>
    <property type="project" value="UniProtKB-UniRule"/>
</dbReference>
<dbReference type="GO" id="GO:0031956">
    <property type="term" value="F:medium-chain fatty acid-CoA ligase activity"/>
    <property type="evidence" value="ECO:0007669"/>
    <property type="project" value="TreeGrafter"/>
</dbReference>
<dbReference type="GO" id="GO:0006631">
    <property type="term" value="P:fatty acid metabolic process"/>
    <property type="evidence" value="ECO:0007669"/>
    <property type="project" value="InterPro"/>
</dbReference>
<dbReference type="GO" id="GO:0008654">
    <property type="term" value="P:phospholipid biosynthetic process"/>
    <property type="evidence" value="ECO:0007669"/>
    <property type="project" value="InterPro"/>
</dbReference>
<dbReference type="CDD" id="cd07989">
    <property type="entry name" value="LPLAT_AGPAT-like"/>
    <property type="match status" value="1"/>
</dbReference>
<dbReference type="Gene3D" id="3.30.300.30">
    <property type="match status" value="1"/>
</dbReference>
<dbReference type="Gene3D" id="3.40.50.12780">
    <property type="entry name" value="N-terminal domain of ligase-like"/>
    <property type="match status" value="1"/>
</dbReference>
<dbReference type="HAMAP" id="MF_01162">
    <property type="entry name" value="Aas"/>
    <property type="match status" value="1"/>
</dbReference>
<dbReference type="InterPro" id="IPR023775">
    <property type="entry name" value="Aas"/>
</dbReference>
<dbReference type="InterPro" id="IPR045851">
    <property type="entry name" value="AMP-bd_C_sf"/>
</dbReference>
<dbReference type="InterPro" id="IPR020845">
    <property type="entry name" value="AMP-binding_CS"/>
</dbReference>
<dbReference type="InterPro" id="IPR000873">
    <property type="entry name" value="AMP-dep_synth/lig_dom"/>
</dbReference>
<dbReference type="InterPro" id="IPR042099">
    <property type="entry name" value="ANL_N_sf"/>
</dbReference>
<dbReference type="InterPro" id="IPR002123">
    <property type="entry name" value="Plipid/glycerol_acylTrfase"/>
</dbReference>
<dbReference type="NCBIfam" id="NF005959">
    <property type="entry name" value="PRK08043.1"/>
    <property type="match status" value="1"/>
</dbReference>
<dbReference type="PANTHER" id="PTHR43201">
    <property type="entry name" value="ACYL-COA SYNTHETASE"/>
    <property type="match status" value="1"/>
</dbReference>
<dbReference type="PANTHER" id="PTHR43201:SF5">
    <property type="entry name" value="MEDIUM-CHAIN ACYL-COA LIGASE ACSF2, MITOCHONDRIAL"/>
    <property type="match status" value="1"/>
</dbReference>
<dbReference type="Pfam" id="PF01553">
    <property type="entry name" value="Acyltransferase"/>
    <property type="match status" value="1"/>
</dbReference>
<dbReference type="Pfam" id="PF00501">
    <property type="entry name" value="AMP-binding"/>
    <property type="match status" value="1"/>
</dbReference>
<dbReference type="SMART" id="SM00563">
    <property type="entry name" value="PlsC"/>
    <property type="match status" value="1"/>
</dbReference>
<dbReference type="SUPFAM" id="SSF56801">
    <property type="entry name" value="Acetyl-CoA synthetase-like"/>
    <property type="match status" value="1"/>
</dbReference>
<dbReference type="SUPFAM" id="SSF69593">
    <property type="entry name" value="Glycerol-3-phosphate (1)-acyltransferase"/>
    <property type="match status" value="1"/>
</dbReference>
<dbReference type="PROSITE" id="PS00455">
    <property type="entry name" value="AMP_BINDING"/>
    <property type="match status" value="1"/>
</dbReference>
<evidence type="ECO:0000255" key="1">
    <source>
        <dbReference type="HAMAP-Rule" id="MF_01162"/>
    </source>
</evidence>
<sequence length="723" mass="79996">MIHTLLRWVFQRLYRIRIEGDSSQFQQSKLLITPNHVSFLDGILLALFLPIKPVFAVYSSISDRWFMRWLKPYIDFVPLDPTKPLAIKGLIKVIERGQPVVVFPEGRISVTGSLMKIYSGAAFVAAKSGATIIPVRIDGAEFTPFGRLAGVFKRRCFPQITITYLPPTTLPMPEADSARTRRALAGEHLHQIMMKARMETRPQHTLYEAFLAARTRYGRRSPSIADISFNEDSYQGLLKKSLGVSRILQRFTRADEHVGMLLPNATITAASILGASLRNRIPAMLNYTAGAKGLQSAMKAAGIKTIVTSRQFLEKGKLTDLPKQVSEANWVYLEDLKDTVTLADKLWILFHLLFPARAMLPQKPDDAAIVLFTSGSEGNPKGVVHSHDSLLANVEQIRTVADFTPRDRFMSALPLFHAFGLTVGLLTPLMTGARIFLYPSPLHYRIVPELVYDQNCTVLFGTSTFLGNYARFAHPYDFARLRYVVAGAEKLSETTRQVWQDKFGIRILEGYGVTECAPVVAINVPMATKIHSVGLLLPEIESRLITVPGITRGGRLQLRGPNIMKGYLRVENPGVLEAPAAENAEGELQQGWYDTGDIVELDEKGFCTIIGRVKRFAKLAGEMVSLESVEQLAVKVSPEAQHAASAKSDSSKGEALVLFTTDSQITRDVLLAQARSSGVPELAVPRDIRYVKALPLLGSGKPDFVTLRHMAEEPVTNASEQSA</sequence>
<proteinExistence type="inferred from homology"/>
<gene>
    <name evidence="1" type="primary">aas</name>
    <name type="ordered locus">PC1_3463</name>
</gene>
<keyword id="KW-0012">Acyltransferase</keyword>
<keyword id="KW-0067">ATP-binding</keyword>
<keyword id="KW-0997">Cell inner membrane</keyword>
<keyword id="KW-1003">Cell membrane</keyword>
<keyword id="KW-0436">Ligase</keyword>
<keyword id="KW-0472">Membrane</keyword>
<keyword id="KW-0511">Multifunctional enzyme</keyword>
<keyword id="KW-0547">Nucleotide-binding</keyword>
<keyword id="KW-0808">Transferase</keyword>
<keyword id="KW-0812">Transmembrane</keyword>
<keyword id="KW-1133">Transmembrane helix</keyword>
<name>AAS_PECCP</name>
<comment type="function">
    <text evidence="1">Plays a role in lysophospholipid acylation. Transfers fatty acids to the 1-position via an enzyme-bound acyl-ACP intermediate in the presence of ATP and magnesium. Its physiological function is to regenerate phosphatidylethanolamine from 2-acyl-glycero-3-phosphoethanolamine (2-acyl-GPE) formed by transacylation reactions or degradation by phospholipase A1.</text>
</comment>
<comment type="catalytic activity">
    <reaction evidence="1">
        <text>a 2-acyl-sn-glycero-3-phosphoethanolamine + a fatty acyl-[ACP] = a 1,2-diacyl-sn-glycero-3-phosphoethanolamine + holo-[ACP]</text>
        <dbReference type="Rhea" id="RHEA:10304"/>
        <dbReference type="Rhea" id="RHEA-COMP:9685"/>
        <dbReference type="Rhea" id="RHEA-COMP:14125"/>
        <dbReference type="ChEBI" id="CHEBI:64479"/>
        <dbReference type="ChEBI" id="CHEBI:64612"/>
        <dbReference type="ChEBI" id="CHEBI:65213"/>
        <dbReference type="ChEBI" id="CHEBI:138651"/>
        <dbReference type="EC" id="2.3.1.40"/>
    </reaction>
</comment>
<comment type="catalytic activity">
    <reaction evidence="1">
        <text>a long-chain fatty acid + holo-[ACP] + ATP = a long-chain fatty acyl-[ACP] + AMP + diphosphate</text>
        <dbReference type="Rhea" id="RHEA:45588"/>
        <dbReference type="Rhea" id="RHEA-COMP:9685"/>
        <dbReference type="Rhea" id="RHEA-COMP:12682"/>
        <dbReference type="ChEBI" id="CHEBI:30616"/>
        <dbReference type="ChEBI" id="CHEBI:33019"/>
        <dbReference type="ChEBI" id="CHEBI:57560"/>
        <dbReference type="ChEBI" id="CHEBI:64479"/>
        <dbReference type="ChEBI" id="CHEBI:133243"/>
        <dbReference type="ChEBI" id="CHEBI:456215"/>
        <dbReference type="EC" id="6.2.1.20"/>
    </reaction>
</comment>
<comment type="subcellular location">
    <subcellularLocation>
        <location evidence="1">Cell inner membrane</location>
        <topology evidence="1">Multi-pass membrane protein</topology>
    </subcellularLocation>
</comment>
<comment type="similarity">
    <text evidence="1">In the N-terminal section; belongs to the 2-acyl-GPE acetyltransferase family.</text>
</comment>
<comment type="similarity">
    <text evidence="1">In the C-terminal section; belongs to the ATP-dependent AMP-binding enzyme family.</text>
</comment>
<reference key="1">
    <citation type="submission" date="2009-07" db="EMBL/GenBank/DDBJ databases">
        <title>Complete sequence of Pectobacterium carotovorum subsp. carotovorum PC1.</title>
        <authorList>
            <consortium name="US DOE Joint Genome Institute"/>
            <person name="Lucas S."/>
            <person name="Copeland A."/>
            <person name="Lapidus A."/>
            <person name="Glavina del Rio T."/>
            <person name="Tice H."/>
            <person name="Bruce D."/>
            <person name="Goodwin L."/>
            <person name="Pitluck S."/>
            <person name="Munk A.C."/>
            <person name="Brettin T."/>
            <person name="Detter J.C."/>
            <person name="Han C."/>
            <person name="Tapia R."/>
            <person name="Larimer F."/>
            <person name="Land M."/>
            <person name="Hauser L."/>
            <person name="Kyrpides N."/>
            <person name="Mikhailova N."/>
            <person name="Balakrishnan V."/>
            <person name="Glasner J."/>
            <person name="Perna N.T."/>
        </authorList>
    </citation>
    <scope>NUCLEOTIDE SEQUENCE [LARGE SCALE GENOMIC DNA]</scope>
    <source>
        <strain>PC1</strain>
    </source>
</reference>
<organism>
    <name type="scientific">Pectobacterium carotovorum subsp. carotovorum (strain PC1)</name>
    <dbReference type="NCBI Taxonomy" id="561230"/>
    <lineage>
        <taxon>Bacteria</taxon>
        <taxon>Pseudomonadati</taxon>
        <taxon>Pseudomonadota</taxon>
        <taxon>Gammaproteobacteria</taxon>
        <taxon>Enterobacterales</taxon>
        <taxon>Pectobacteriaceae</taxon>
        <taxon>Pectobacterium</taxon>
    </lineage>
</organism>